<name>RL31B_ECOSE</name>
<dbReference type="EMBL" id="AP009240">
    <property type="protein sequence ID" value="BAG75838.1"/>
    <property type="molecule type" value="Genomic_DNA"/>
</dbReference>
<dbReference type="RefSeq" id="WP_000803999.1">
    <property type="nucleotide sequence ID" value="NC_011415.1"/>
</dbReference>
<dbReference type="SMR" id="B6I084"/>
<dbReference type="KEGG" id="ecy:ECSE_0314"/>
<dbReference type="HOGENOM" id="CLU_114306_2_1_6"/>
<dbReference type="Proteomes" id="UP000008199">
    <property type="component" value="Chromosome"/>
</dbReference>
<dbReference type="GO" id="GO:1990904">
    <property type="term" value="C:ribonucleoprotein complex"/>
    <property type="evidence" value="ECO:0007669"/>
    <property type="project" value="UniProtKB-KW"/>
</dbReference>
<dbReference type="GO" id="GO:0005840">
    <property type="term" value="C:ribosome"/>
    <property type="evidence" value="ECO:0007669"/>
    <property type="project" value="UniProtKB-KW"/>
</dbReference>
<dbReference type="GO" id="GO:0003735">
    <property type="term" value="F:structural constituent of ribosome"/>
    <property type="evidence" value="ECO:0007669"/>
    <property type="project" value="InterPro"/>
</dbReference>
<dbReference type="GO" id="GO:0006412">
    <property type="term" value="P:translation"/>
    <property type="evidence" value="ECO:0007669"/>
    <property type="project" value="UniProtKB-UniRule"/>
</dbReference>
<dbReference type="FunFam" id="4.10.830.30:FF:000002">
    <property type="entry name" value="50S ribosomal protein L31 type B"/>
    <property type="match status" value="1"/>
</dbReference>
<dbReference type="Gene3D" id="4.10.830.30">
    <property type="entry name" value="Ribosomal protein L31"/>
    <property type="match status" value="1"/>
</dbReference>
<dbReference type="HAMAP" id="MF_00502">
    <property type="entry name" value="Ribosomal_bL31_2"/>
    <property type="match status" value="1"/>
</dbReference>
<dbReference type="InterPro" id="IPR034704">
    <property type="entry name" value="Ribosomal_bL28/bL31-like_sf"/>
</dbReference>
<dbReference type="InterPro" id="IPR002150">
    <property type="entry name" value="Ribosomal_bL31"/>
</dbReference>
<dbReference type="InterPro" id="IPR027493">
    <property type="entry name" value="Ribosomal_bL31_B"/>
</dbReference>
<dbReference type="InterPro" id="IPR042105">
    <property type="entry name" value="Ribosomal_bL31_sf"/>
</dbReference>
<dbReference type="NCBIfam" id="TIGR00105">
    <property type="entry name" value="L31"/>
    <property type="match status" value="1"/>
</dbReference>
<dbReference type="NCBIfam" id="NF002462">
    <property type="entry name" value="PRK01678.1"/>
    <property type="match status" value="1"/>
</dbReference>
<dbReference type="PANTHER" id="PTHR33280">
    <property type="entry name" value="50S RIBOSOMAL PROTEIN L31, CHLOROPLASTIC"/>
    <property type="match status" value="1"/>
</dbReference>
<dbReference type="PANTHER" id="PTHR33280:SF1">
    <property type="entry name" value="LARGE RIBOSOMAL SUBUNIT PROTEIN BL31C"/>
    <property type="match status" value="1"/>
</dbReference>
<dbReference type="Pfam" id="PF01197">
    <property type="entry name" value="Ribosomal_L31"/>
    <property type="match status" value="1"/>
</dbReference>
<dbReference type="PRINTS" id="PR01249">
    <property type="entry name" value="RIBOSOMALL31"/>
</dbReference>
<dbReference type="SUPFAM" id="SSF143800">
    <property type="entry name" value="L28p-like"/>
    <property type="match status" value="1"/>
</dbReference>
<dbReference type="PROSITE" id="PS01143">
    <property type="entry name" value="RIBOSOMAL_L31"/>
    <property type="match status" value="1"/>
</dbReference>
<reference key="1">
    <citation type="journal article" date="2008" name="DNA Res.">
        <title>Complete genome sequence and comparative analysis of the wild-type commensal Escherichia coli strain SE11 isolated from a healthy adult.</title>
        <authorList>
            <person name="Oshima K."/>
            <person name="Toh H."/>
            <person name="Ogura Y."/>
            <person name="Sasamoto H."/>
            <person name="Morita H."/>
            <person name="Park S.-H."/>
            <person name="Ooka T."/>
            <person name="Iyoda S."/>
            <person name="Taylor T.D."/>
            <person name="Hayashi T."/>
            <person name="Itoh K."/>
            <person name="Hattori M."/>
        </authorList>
    </citation>
    <scope>NUCLEOTIDE SEQUENCE [LARGE SCALE GENOMIC DNA]</scope>
    <source>
        <strain>SE11</strain>
    </source>
</reference>
<organism>
    <name type="scientific">Escherichia coli (strain SE11)</name>
    <dbReference type="NCBI Taxonomy" id="409438"/>
    <lineage>
        <taxon>Bacteria</taxon>
        <taxon>Pseudomonadati</taxon>
        <taxon>Pseudomonadota</taxon>
        <taxon>Gammaproteobacteria</taxon>
        <taxon>Enterobacterales</taxon>
        <taxon>Enterobacteriaceae</taxon>
        <taxon>Escherichia</taxon>
    </lineage>
</organism>
<keyword id="KW-0687">Ribonucleoprotein</keyword>
<keyword id="KW-0689">Ribosomal protein</keyword>
<gene>
    <name evidence="1" type="primary">rpmE2</name>
    <name type="ordered locus">ECSE_0314</name>
</gene>
<proteinExistence type="inferred from homology"/>
<feature type="chain" id="PRO_1000126807" description="Large ribosomal subunit protein bL31B">
    <location>
        <begin position="1"/>
        <end position="87"/>
    </location>
</feature>
<comment type="subunit">
    <text evidence="1">Part of the 50S ribosomal subunit.</text>
</comment>
<comment type="similarity">
    <text evidence="1">Belongs to the bacterial ribosomal protein bL31 family. Type B subfamily.</text>
</comment>
<sequence length="87" mass="9936">MKPNIHPEYRTVVFHDTSVDEYFKIGSTIKTDREIELDGVTYPYVTIDVSSKSHPFYTGKLRTVASEGNVARFTQRFGRFVSTKKGS</sequence>
<accession>B6I084</accession>
<protein>
    <recommendedName>
        <fullName evidence="1">Large ribosomal subunit protein bL31B</fullName>
    </recommendedName>
    <alternativeName>
        <fullName evidence="2">50S ribosomal protein L31 type B</fullName>
    </alternativeName>
</protein>
<evidence type="ECO:0000255" key="1">
    <source>
        <dbReference type="HAMAP-Rule" id="MF_00502"/>
    </source>
</evidence>
<evidence type="ECO:0000305" key="2"/>